<name>OPTN_MACFA</name>
<feature type="chain" id="PRO_0000058067" description="Optineurin">
    <location>
        <begin position="1"/>
        <end position="571"/>
    </location>
</feature>
<feature type="zinc finger region" description="CCHC NOA-type" evidence="4">
    <location>
        <begin position="541"/>
        <end position="571"/>
    </location>
</feature>
<feature type="region of interest" description="Disordered" evidence="5">
    <location>
        <begin position="1"/>
        <end position="32"/>
    </location>
</feature>
<feature type="region of interest" description="Interaction with Rab8" evidence="1">
    <location>
        <begin position="58"/>
        <end position="209"/>
    </location>
</feature>
<feature type="region of interest" description="Disordered" evidence="5">
    <location>
        <begin position="100"/>
        <end position="144"/>
    </location>
</feature>
<feature type="region of interest" description="Disordered" evidence="5">
    <location>
        <begin position="186"/>
        <end position="210"/>
    </location>
</feature>
<feature type="region of interest" description="Disordered" evidence="5">
    <location>
        <begin position="255"/>
        <end position="291"/>
    </location>
</feature>
<feature type="region of interest" description="Interaction with HD" evidence="1">
    <location>
        <begin position="405"/>
        <end position="571"/>
    </location>
</feature>
<feature type="region of interest" description="Interaction with MYO6" evidence="2">
    <location>
        <begin position="406"/>
        <end position="514"/>
    </location>
</feature>
<feature type="coiled-coil region" evidence="3">
    <location>
        <begin position="38"/>
        <end position="170"/>
    </location>
</feature>
<feature type="coiled-coil region" evidence="3">
    <location>
        <begin position="233"/>
        <end position="502"/>
    </location>
</feature>
<feature type="short sequence motif" description="LIR">
    <location>
        <begin position="176"/>
        <end position="181"/>
    </location>
</feature>
<feature type="short sequence motif" description="UBAN">
    <location>
        <begin position="468"/>
        <end position="473"/>
    </location>
</feature>
<feature type="compositionally biased region" description="Basic and acidic residues" evidence="5">
    <location>
        <begin position="100"/>
        <end position="123"/>
    </location>
</feature>
<feature type="compositionally biased region" description="Basic and acidic residues" evidence="5">
    <location>
        <begin position="130"/>
        <end position="143"/>
    </location>
</feature>
<feature type="compositionally biased region" description="Basic and acidic residues" evidence="5">
    <location>
        <begin position="186"/>
        <end position="197"/>
    </location>
</feature>
<feature type="compositionally biased region" description="Polar residues" evidence="5">
    <location>
        <begin position="201"/>
        <end position="210"/>
    </location>
</feature>
<feature type="compositionally biased region" description="Basic and acidic residues" evidence="5">
    <location>
        <begin position="255"/>
        <end position="268"/>
    </location>
</feature>
<feature type="compositionally biased region" description="Basic and acidic residues" evidence="5">
    <location>
        <begin position="275"/>
        <end position="286"/>
    </location>
</feature>
<feature type="binding site" evidence="4">
    <location>
        <position position="549"/>
    </location>
    <ligand>
        <name>Zn(2+)</name>
        <dbReference type="ChEBI" id="CHEBI:29105"/>
    </ligand>
</feature>
<feature type="binding site" evidence="4">
    <location>
        <position position="552"/>
    </location>
    <ligand>
        <name>Zn(2+)</name>
        <dbReference type="ChEBI" id="CHEBI:29105"/>
    </ligand>
</feature>
<feature type="binding site" evidence="4">
    <location>
        <position position="565"/>
    </location>
    <ligand>
        <name>Zn(2+)</name>
        <dbReference type="ChEBI" id="CHEBI:29105"/>
    </ligand>
</feature>
<feature type="binding site" evidence="4">
    <location>
        <position position="569"/>
    </location>
    <ligand>
        <name>Zn(2+)</name>
        <dbReference type="ChEBI" id="CHEBI:29105"/>
    </ligand>
</feature>
<feature type="modified residue" description="Phosphoserine; by TBK1" evidence="2">
    <location>
        <position position="177"/>
    </location>
</feature>
<feature type="modified residue" description="Phosphoserine" evidence="2">
    <location>
        <position position="198"/>
    </location>
</feature>
<feature type="modified residue" description="Phosphoserine" evidence="2">
    <location>
        <position position="336"/>
    </location>
</feature>
<feature type="modified residue" description="Phosphoserine" evidence="2">
    <location>
        <position position="520"/>
    </location>
</feature>
<organism evidence="7">
    <name type="scientific">Macaca fascicularis</name>
    <name type="common">Crab-eating macaque</name>
    <name type="synonym">Cynomolgus monkey</name>
    <dbReference type="NCBI Taxonomy" id="9541"/>
    <lineage>
        <taxon>Eukaryota</taxon>
        <taxon>Metazoa</taxon>
        <taxon>Chordata</taxon>
        <taxon>Craniata</taxon>
        <taxon>Vertebrata</taxon>
        <taxon>Euteleostomi</taxon>
        <taxon>Mammalia</taxon>
        <taxon>Eutheria</taxon>
        <taxon>Euarchontoglires</taxon>
        <taxon>Primates</taxon>
        <taxon>Haplorrhini</taxon>
        <taxon>Catarrhini</taxon>
        <taxon>Cercopithecidae</taxon>
        <taxon>Cercopithecinae</taxon>
        <taxon>Macaca</taxon>
    </lineage>
</organism>
<protein>
    <recommendedName>
        <fullName>Optineurin</fullName>
    </recommendedName>
</protein>
<keyword id="KW-0072">Autophagy</keyword>
<keyword id="KW-0175">Coiled coil</keyword>
<keyword id="KW-0963">Cytoplasm</keyword>
<keyword id="KW-0968">Cytoplasmic vesicle</keyword>
<keyword id="KW-0967">Endosome</keyword>
<keyword id="KW-0333">Golgi apparatus</keyword>
<keyword id="KW-0479">Metal-binding</keyword>
<keyword id="KW-0597">Phosphoprotein</keyword>
<keyword id="KW-1185">Reference proteome</keyword>
<keyword id="KW-0862">Zinc</keyword>
<keyword id="KW-0863">Zinc-finger</keyword>
<dbReference type="EMBL" id="AB056409">
    <property type="protein sequence ID" value="BAB33067.1"/>
    <property type="molecule type" value="mRNA"/>
</dbReference>
<dbReference type="EMBL" id="AB063036">
    <property type="protein sequence ID" value="BAB60774.1"/>
    <property type="status" value="ALT_FRAME"/>
    <property type="molecule type" value="mRNA"/>
</dbReference>
<dbReference type="RefSeq" id="NP_001272065.1">
    <property type="nucleotide sequence ID" value="NM_001285136.1"/>
</dbReference>
<dbReference type="RefSeq" id="XP_015310940.1">
    <property type="nucleotide sequence ID" value="XM_015455454.1"/>
</dbReference>
<dbReference type="RefSeq" id="XP_015310941.1">
    <property type="nucleotide sequence ID" value="XM_015455455.1"/>
</dbReference>
<dbReference type="RefSeq" id="XP_015310942.1">
    <property type="nucleotide sequence ID" value="XM_015455456.1"/>
</dbReference>
<dbReference type="RefSeq" id="XP_015310943.1">
    <property type="nucleotide sequence ID" value="XM_015455457.1"/>
</dbReference>
<dbReference type="RefSeq" id="XP_015310944.1">
    <property type="nucleotide sequence ID" value="XM_015455458.1"/>
</dbReference>
<dbReference type="RefSeq" id="XP_015310945.1">
    <property type="nucleotide sequence ID" value="XM_015455459.1"/>
</dbReference>
<dbReference type="SMR" id="Q95KA2"/>
<dbReference type="STRING" id="9541.ENSMFAP00000028558"/>
<dbReference type="GeneID" id="102122718"/>
<dbReference type="KEGG" id="mcf:102122718"/>
<dbReference type="CTD" id="10133"/>
<dbReference type="eggNOG" id="ENOG502QTG2">
    <property type="taxonomic scope" value="Eukaryota"/>
</dbReference>
<dbReference type="Proteomes" id="UP000233100">
    <property type="component" value="Unplaced"/>
</dbReference>
<dbReference type="GO" id="GO:0005776">
    <property type="term" value="C:autophagosome"/>
    <property type="evidence" value="ECO:0007669"/>
    <property type="project" value="UniProtKB-SubCell"/>
</dbReference>
<dbReference type="GO" id="GO:0005794">
    <property type="term" value="C:Golgi apparatus"/>
    <property type="evidence" value="ECO:0000250"/>
    <property type="project" value="UniProtKB"/>
</dbReference>
<dbReference type="GO" id="GO:0005634">
    <property type="term" value="C:nucleus"/>
    <property type="evidence" value="ECO:0007669"/>
    <property type="project" value="TreeGrafter"/>
</dbReference>
<dbReference type="GO" id="GO:0048471">
    <property type="term" value="C:perinuclear region of cytoplasm"/>
    <property type="evidence" value="ECO:0007669"/>
    <property type="project" value="UniProtKB-SubCell"/>
</dbReference>
<dbReference type="GO" id="GO:0055037">
    <property type="term" value="C:recycling endosome"/>
    <property type="evidence" value="ECO:0007669"/>
    <property type="project" value="UniProtKB-SubCell"/>
</dbReference>
<dbReference type="GO" id="GO:0005802">
    <property type="term" value="C:trans-Golgi network"/>
    <property type="evidence" value="ECO:0000250"/>
    <property type="project" value="UniProtKB"/>
</dbReference>
<dbReference type="GO" id="GO:0070530">
    <property type="term" value="F:K63-linked polyubiquitin modification-dependent protein binding"/>
    <property type="evidence" value="ECO:0007669"/>
    <property type="project" value="InterPro"/>
</dbReference>
<dbReference type="GO" id="GO:0008270">
    <property type="term" value="F:zinc ion binding"/>
    <property type="evidence" value="ECO:0007669"/>
    <property type="project" value="UniProtKB-KW"/>
</dbReference>
<dbReference type="GO" id="GO:0006914">
    <property type="term" value="P:autophagy"/>
    <property type="evidence" value="ECO:0007669"/>
    <property type="project" value="UniProtKB-KW"/>
</dbReference>
<dbReference type="GO" id="GO:0034620">
    <property type="term" value="P:cellular response to unfolded protein"/>
    <property type="evidence" value="ECO:0000250"/>
    <property type="project" value="UniProtKB"/>
</dbReference>
<dbReference type="GO" id="GO:0090161">
    <property type="term" value="P:Golgi ribbon formation"/>
    <property type="evidence" value="ECO:0000250"/>
    <property type="project" value="UniProtKB"/>
</dbReference>
<dbReference type="GO" id="GO:0034067">
    <property type="term" value="P:protein localization to Golgi apparatus"/>
    <property type="evidence" value="ECO:0007669"/>
    <property type="project" value="TreeGrafter"/>
</dbReference>
<dbReference type="GO" id="GO:0043122">
    <property type="term" value="P:regulation of canonical NF-kappaB signal transduction"/>
    <property type="evidence" value="ECO:0007669"/>
    <property type="project" value="TreeGrafter"/>
</dbReference>
<dbReference type="CDD" id="cd09803">
    <property type="entry name" value="UBAN"/>
    <property type="match status" value="1"/>
</dbReference>
<dbReference type="FunFam" id="1.20.5.390:FF:000004">
    <property type="entry name" value="Optineurin"/>
    <property type="match status" value="1"/>
</dbReference>
<dbReference type="FunFam" id="1.20.5.390:FF:000007">
    <property type="entry name" value="Optineurin"/>
    <property type="match status" value="1"/>
</dbReference>
<dbReference type="FunFam" id="1.20.5.990:FF:000002">
    <property type="entry name" value="Optineurin"/>
    <property type="match status" value="1"/>
</dbReference>
<dbReference type="Gene3D" id="1.20.5.390">
    <property type="entry name" value="L1 transposable element, trimerization domain"/>
    <property type="match status" value="2"/>
</dbReference>
<dbReference type="Gene3D" id="1.20.5.990">
    <property type="entry name" value="Nemo cc2-lz domain - 1d5 darpin complex"/>
    <property type="match status" value="1"/>
</dbReference>
<dbReference type="InterPro" id="IPR032419">
    <property type="entry name" value="CC2-LZ_dom"/>
</dbReference>
<dbReference type="InterPro" id="IPR021063">
    <property type="entry name" value="NEMO_N"/>
</dbReference>
<dbReference type="InterPro" id="IPR034735">
    <property type="entry name" value="NEMO_ZF"/>
</dbReference>
<dbReference type="InterPro" id="IPR051301">
    <property type="entry name" value="Optineurin/NFkB_EssMod"/>
</dbReference>
<dbReference type="PANTHER" id="PTHR31553">
    <property type="entry name" value="NF-KAPPA-B ESSENTIAL MODULATOR"/>
    <property type="match status" value="1"/>
</dbReference>
<dbReference type="PANTHER" id="PTHR31553:SF2">
    <property type="entry name" value="OPTINEURIN"/>
    <property type="match status" value="1"/>
</dbReference>
<dbReference type="Pfam" id="PF16516">
    <property type="entry name" value="CC2-LZ"/>
    <property type="match status" value="1"/>
</dbReference>
<dbReference type="Pfam" id="PF11577">
    <property type="entry name" value="NEMO"/>
    <property type="match status" value="1"/>
</dbReference>
<dbReference type="Pfam" id="PF18414">
    <property type="entry name" value="zf_C2H2_10"/>
    <property type="match status" value="1"/>
</dbReference>
<dbReference type="PROSITE" id="PS51801">
    <property type="entry name" value="ZF_CCHC_NOA"/>
    <property type="match status" value="1"/>
</dbReference>
<proteinExistence type="evidence at transcript level"/>
<comment type="function">
    <text evidence="1 2">Plays an important role in the maintenance of the Golgi complex, in membrane trafficking, in exocytosis, through its interaction with myosin VI and Rab8. Links myosin VI to the Golgi complex and plays an important role in Golgi ribbon formation. Negatively regulates the induction of IFNB in response to RNA virus infection. Plays a neuroprotective role in the eye and optic nerve. Probably part of the TNF-alpha signaling pathway that can shift the equilibrium toward induction of cell death. May act by regulating membrane trafficking and cellular morphogenesis via a complex that contains Rab8 and huntingtin (HD). Mediates the interaction of Rab8 with the probable GTPase-activating protein TBC1D17 during Rab8-mediated endocytic trafficking, such as that of transferrin receptor (TFRC/TfR); regulates Rab8 recruitment to tubules emanating from the endocytic recycling compartment. Autophagy receptor that interacts directly with both the cargo to become degraded and an autophagy modifier of the MAP1 LC3 family; targets ubiquitin-coated bacteria (xenophagy) and appears to function in the same pathway as SQSTM1 and CALCOCO2/NDP52.</text>
</comment>
<comment type="subunit">
    <text evidence="2">Self-associates. Interacts with HD. Interacts with GTF3A. Interacts with MYO6. Interacts (via UBAN) with ubiquitinated TFRC. Interacts with GTP-bound Rab8 (RAB8A and/or RAB8B). Interacts with TBC1D17. Interacts with TBK1. Interacts with TRAF3. Binds to linear ubiquitin chains. Interacts with LC3 family members MAP1LC3A, MAP1LC3B, GABARAP, GABARAPL1 and GABARAPL2; OPTN phosphorylation increases the association (at least with MAP1LC3B). Interacts with RAB12; the interaction may be indirect. Interacts with TBK1; this interaction leads to the Golgi localization of TBK1 and its subsequent activation. Interacts with palmitoyltransferase ZDHHC17/HIP14; the interaction does not lead to palmitoylation of OPTN. Interacts with CYLD. Interacts with TOM1; the interaction is indirect and is mediated by MYO6, which acts as a bridge between TOM1 and OPTN. Interacts with USP12; the interaction is independent of USP12 deubiquitinase activity and may be involved in regulation of autophagic flux.</text>
</comment>
<comment type="subcellular location">
    <subcellularLocation>
        <location evidence="1">Cytoplasm</location>
        <location evidence="1">Perinuclear region</location>
    </subcellularLocation>
    <subcellularLocation>
        <location evidence="2">Golgi apparatus</location>
    </subcellularLocation>
    <subcellularLocation>
        <location evidence="1">Golgi apparatus</location>
        <location evidence="1">trans-Golgi network</location>
    </subcellularLocation>
    <subcellularLocation>
        <location evidence="1">Cytoplasmic vesicle</location>
        <location evidence="1">Autophagosome</location>
    </subcellularLocation>
    <subcellularLocation>
        <location evidence="1">Cytoplasmic vesicle</location>
    </subcellularLocation>
    <subcellularLocation>
        <location evidence="1">Recycling endosome</location>
    </subcellularLocation>
    <text evidence="1 2">Found in the perinuclear region and associates with the Golgi apparatus. Colocalizes with MYO6 and RAB8 at the Golgi complex and in vesicular structures close to the plasma membrane. Localizes to LC3-positive cytoplasmic vesicles upon induction of autophagy.</text>
</comment>
<comment type="domain">
    <text evidence="1">The LIR (LC3-interacting region) motif mediates the interaction with ATG8 family proteins.</text>
</comment>
<comment type="domain">
    <text evidence="1">Ubiquitin-binding motif (UBAN) is essential for its inhibitory function, subcellular localization and interaction with TBK1.</text>
</comment>
<comment type="PTM">
    <text evidence="1">Phosphorylated by TBK1, leading to restrict bacterial proliferation in case of infection.</text>
</comment>
<comment type="sequence caution" evidence="6">
    <conflict type="frameshift">
        <sequence resource="EMBL-CDS" id="BAB60774"/>
    </conflict>
</comment>
<reference key="1">
    <citation type="submission" date="2001-06" db="EMBL/GenBank/DDBJ databases">
        <title>Isolation of full-length cDNA clones from macaque brain cDNA libraries.</title>
        <authorList>
            <person name="Osada N."/>
            <person name="Hida M."/>
            <person name="Kusuda J."/>
            <person name="Tanuma R."/>
            <person name="Iseki K."/>
            <person name="Hirai M."/>
            <person name="Terao K."/>
            <person name="Suzuki Y."/>
            <person name="Sugano S."/>
            <person name="Hashimoto K."/>
        </authorList>
    </citation>
    <scope>NUCLEOTIDE SEQUENCE [LARGE SCALE MRNA]</scope>
    <source>
        <tissue>Frontal cortex</tissue>
        <tissue>Medulla oblongata</tissue>
    </source>
</reference>
<accession>Q95KA2</accession>
<accession>Q9BGR3</accession>
<evidence type="ECO:0000250" key="1"/>
<evidence type="ECO:0000250" key="2">
    <source>
        <dbReference type="UniProtKB" id="Q96CV9"/>
    </source>
</evidence>
<evidence type="ECO:0000255" key="3"/>
<evidence type="ECO:0000255" key="4">
    <source>
        <dbReference type="PROSITE-ProRule" id="PRU01142"/>
    </source>
</evidence>
<evidence type="ECO:0000256" key="5">
    <source>
        <dbReference type="SAM" id="MobiDB-lite"/>
    </source>
</evidence>
<evidence type="ECO:0000305" key="6"/>
<evidence type="ECO:0000312" key="7">
    <source>
        <dbReference type="Proteomes" id="UP000233100"/>
    </source>
</evidence>
<gene>
    <name type="primary">OPTN</name>
    <name type="ORF">QflA-13191</name>
    <name type="ORF">QmoA-11721</name>
</gene>
<sequence length="571" mass="65046">MSHQPLSCLTEKGDSPSESTGNGPPHLAHPNLDTFTPEELLQQMKELLTENHQLKEAMKLNNQAMKGRFEELSAWTEKQKEERQFFETQSKEAKERLMALSHENEKLKEELGKLKGKSERSSEDPTGDSRLPRAEAEQEKDQLRTQVTRLQAEKADLLGIVSELQLKLNSSGSSEDSFVEIRMAEGEAEGSVKEIKHSPGPTRTVSIGTSRSAEGAKNYLEHEELTVSQLLLCLREGNQKVERLEIALKEAKERVSDFEKKASNRSEIETQTEGSTEKENEEEKGPETVGSEVEALNLQVTSLFKELQEAHTKLSEAELMKKRLQEKCQALERKNSATPSELNEKQELVYTNKKLELQVESMLSEIKMEQAKTEDEKSKLAMLQLTHNKLLQEHNHALKTIEELTRKESEKVDRAVLKELSEKLELAEKALASKQLQMDEMKQTIAKQEEDLETMTVLRAQMEVYCSDFHAERAAREKIHEEKEQLALQLAVLLKENDAFEDGGRQSLMEMQSRHGARTSDPDQQAYLVQRGTEDRDWQQQRNIPIHSCPKCGEVLPDIDTLQIHVMDCII</sequence>